<dbReference type="EMBL" id="AK029011">
    <property type="protein sequence ID" value="BAC26241.1"/>
    <property type="molecule type" value="mRNA"/>
</dbReference>
<dbReference type="EMBL" id="AK045838">
    <property type="protein sequence ID" value="BAC32508.1"/>
    <property type="status" value="ALT_SEQ"/>
    <property type="molecule type" value="mRNA"/>
</dbReference>
<dbReference type="EMBL" id="AK045987">
    <property type="protein sequence ID" value="BAC32562.1"/>
    <property type="status" value="ALT_SEQ"/>
    <property type="molecule type" value="mRNA"/>
</dbReference>
<dbReference type="EMBL" id="AK155272">
    <property type="protein sequence ID" value="BAE33156.1"/>
    <property type="molecule type" value="mRNA"/>
</dbReference>
<dbReference type="EMBL" id="BC031376">
    <property type="protein sequence ID" value="AAH31376.1"/>
    <property type="molecule type" value="mRNA"/>
</dbReference>
<dbReference type="EMBL" id="BC057681">
    <property type="protein sequence ID" value="AAH57681.1"/>
    <property type="molecule type" value="mRNA"/>
</dbReference>
<dbReference type="EMBL" id="AF090326">
    <property type="protein sequence ID" value="AAD02854.1"/>
    <property type="status" value="ALT_FRAME"/>
    <property type="molecule type" value="mRNA"/>
</dbReference>
<dbReference type="CCDS" id="CCDS20673.1">
    <molecule id="Q9Z248-2"/>
</dbReference>
<dbReference type="CCDS" id="CCDS20674.1">
    <molecule id="Q9Z248-4"/>
</dbReference>
<dbReference type="CCDS" id="CCDS39689.2">
    <molecule id="Q9Z248-1"/>
</dbReference>
<dbReference type="CCDS" id="CCDS80631.1">
    <molecule id="Q9Z248-3"/>
</dbReference>
<dbReference type="RefSeq" id="NP_001005605.1">
    <molecule id="Q9Z248-2"/>
    <property type="nucleotide sequence ID" value="NM_001005605.3"/>
</dbReference>
<dbReference type="RefSeq" id="NP_001296365.1">
    <molecule id="Q9Z248-3"/>
    <property type="nucleotide sequence ID" value="NM_001309436.2"/>
</dbReference>
<dbReference type="RefSeq" id="NP_001296366.1">
    <molecule id="Q9Z248-3"/>
    <property type="nucleotide sequence ID" value="NM_001309437.1"/>
</dbReference>
<dbReference type="RefSeq" id="NP_033767.2">
    <molecule id="Q9Z248-1"/>
    <property type="nucleotide sequence ID" value="NM_009637.5"/>
</dbReference>
<dbReference type="RefSeq" id="NP_848918.1">
    <molecule id="Q9Z248-4"/>
    <property type="nucleotide sequence ID" value="NM_178803.3"/>
</dbReference>
<dbReference type="RefSeq" id="XP_006506969.1">
    <molecule id="Q9Z248-2"/>
    <property type="nucleotide sequence ID" value="XM_006506906.1"/>
</dbReference>
<dbReference type="RefSeq" id="XP_006506972.1">
    <molecule id="Q9Z248-3"/>
    <property type="nucleotide sequence ID" value="XM_006506909.4"/>
</dbReference>
<dbReference type="SMR" id="Q9Z248"/>
<dbReference type="BioGRID" id="198014">
    <property type="interactions" value="7"/>
</dbReference>
<dbReference type="FunCoup" id="Q9Z248">
    <property type="interactions" value="3379"/>
</dbReference>
<dbReference type="IntAct" id="Q9Z248">
    <property type="interactions" value="5"/>
</dbReference>
<dbReference type="MINT" id="Q9Z248"/>
<dbReference type="STRING" id="10090.ENSMUSP00000092993"/>
<dbReference type="iPTMnet" id="Q9Z248"/>
<dbReference type="PhosphoSitePlus" id="Q9Z248"/>
<dbReference type="jPOST" id="Q9Z248"/>
<dbReference type="PaxDb" id="10090-ENSMUSP00000084896"/>
<dbReference type="PeptideAtlas" id="Q9Z248"/>
<dbReference type="ProteomicsDB" id="285729">
    <molecule id="Q9Z248-1"/>
</dbReference>
<dbReference type="ProteomicsDB" id="285730">
    <molecule id="Q9Z248-2"/>
</dbReference>
<dbReference type="ProteomicsDB" id="285731">
    <molecule id="Q9Z248-3"/>
</dbReference>
<dbReference type="ProteomicsDB" id="285732">
    <molecule id="Q9Z248-4"/>
</dbReference>
<dbReference type="ProteomicsDB" id="285733">
    <molecule id="Q9Z248-5"/>
</dbReference>
<dbReference type="Pumba" id="Q9Z248"/>
<dbReference type="Antibodypedia" id="23931">
    <property type="antibodies" value="227 antibodies from 26 providers"/>
</dbReference>
<dbReference type="DNASU" id="11569"/>
<dbReference type="Ensembl" id="ENSMUST00000032359.15">
    <molecule id="Q9Z248-4"/>
    <property type="protein sequence ID" value="ENSMUSP00000032359.9"/>
    <property type="gene ID" value="ENSMUSG00000030232.20"/>
</dbReference>
<dbReference type="Ensembl" id="ENSMUST00000087614.11">
    <molecule id="Q9Z248-2"/>
    <property type="protein sequence ID" value="ENSMUSP00000084896.5"/>
    <property type="gene ID" value="ENSMUSG00000030232.20"/>
</dbReference>
<dbReference type="Ensembl" id="ENSMUST00000095350.12">
    <molecule id="Q9Z248-1"/>
    <property type="protein sequence ID" value="ENSMUSP00000092993.6"/>
    <property type="gene ID" value="ENSMUSG00000030232.20"/>
</dbReference>
<dbReference type="Ensembl" id="ENSMUST00000160836.8">
    <molecule id="Q9Z248-3"/>
    <property type="protein sequence ID" value="ENSMUSP00000124148.2"/>
    <property type="gene ID" value="ENSMUSG00000030232.20"/>
</dbReference>
<dbReference type="Ensembl" id="ENSMUST00000161335.8">
    <molecule id="Q9Z248-3"/>
    <property type="protein sequence ID" value="ENSMUSP00000125479.2"/>
    <property type="gene ID" value="ENSMUSG00000030232.20"/>
</dbReference>
<dbReference type="Ensembl" id="ENSMUST00000162903.8">
    <molecule id="Q9Z248-2"/>
    <property type="protein sequence ID" value="ENSMUSP00000123897.4"/>
    <property type="gene ID" value="ENSMUSG00000030232.20"/>
</dbReference>
<dbReference type="Ensembl" id="ENSMUST00000249348.1">
    <molecule id="Q9Z248-3"/>
    <property type="protein sequence ID" value="ENSMUSP00000159710.1"/>
    <property type="gene ID" value="ENSMUSG00000030232.20"/>
</dbReference>
<dbReference type="Ensembl" id="ENSMUST00000249350.1">
    <molecule id="Q9Z248-1"/>
    <property type="protein sequence ID" value="ENSMUSP00000159712.1"/>
    <property type="gene ID" value="ENSMUSG00000030232.20"/>
</dbReference>
<dbReference type="GeneID" id="11569"/>
<dbReference type="KEGG" id="mmu:11569"/>
<dbReference type="UCSC" id="uc009eoi.1">
    <molecule id="Q9Z248-1"/>
    <property type="organism name" value="mouse"/>
</dbReference>
<dbReference type="UCSC" id="uc009eol.1">
    <molecule id="Q9Z248-3"/>
    <property type="organism name" value="mouse"/>
</dbReference>
<dbReference type="AGR" id="MGI:1338038"/>
<dbReference type="CTD" id="121536"/>
<dbReference type="MGI" id="MGI:1338038">
    <property type="gene designation" value="Aebp2"/>
</dbReference>
<dbReference type="VEuPathDB" id="HostDB:ENSMUSG00000030232"/>
<dbReference type="eggNOG" id="KOG1721">
    <property type="taxonomic scope" value="Eukaryota"/>
</dbReference>
<dbReference type="GeneTree" id="ENSGT00510000048519"/>
<dbReference type="HOGENOM" id="CLU_029789_0_0_1"/>
<dbReference type="InParanoid" id="Q9Z248"/>
<dbReference type="OMA" id="FAENICL"/>
<dbReference type="OrthoDB" id="9984614at2759"/>
<dbReference type="PhylomeDB" id="Q9Z248"/>
<dbReference type="TreeFam" id="TF328864"/>
<dbReference type="Reactome" id="R-MMU-212300">
    <property type="pathway name" value="PRC2 methylates histones and DNA"/>
</dbReference>
<dbReference type="Reactome" id="R-MMU-3214841">
    <property type="pathway name" value="PKMTs methylate histone lysines"/>
</dbReference>
<dbReference type="BioGRID-ORCS" id="11569">
    <property type="hits" value="4 hits in 81 CRISPR screens"/>
</dbReference>
<dbReference type="ChiTaRS" id="Aebp2">
    <property type="organism name" value="mouse"/>
</dbReference>
<dbReference type="PRO" id="PR:Q9Z248"/>
<dbReference type="Proteomes" id="UP000000589">
    <property type="component" value="Chromosome 6"/>
</dbReference>
<dbReference type="RNAct" id="Q9Z248">
    <property type="molecule type" value="protein"/>
</dbReference>
<dbReference type="Bgee" id="ENSMUSG00000030232">
    <property type="expression patterns" value="Expressed in metanephric cortical collecting duct and 255 other cell types or tissues"/>
</dbReference>
<dbReference type="ExpressionAtlas" id="Q9Z248">
    <property type="expression patterns" value="baseline and differential"/>
</dbReference>
<dbReference type="GO" id="GO:0035098">
    <property type="term" value="C:ESC/E(Z) complex"/>
    <property type="evidence" value="ECO:0000314"/>
    <property type="project" value="UniProtKB"/>
</dbReference>
<dbReference type="GO" id="GO:0005634">
    <property type="term" value="C:nucleus"/>
    <property type="evidence" value="ECO:0000314"/>
    <property type="project" value="MGI"/>
</dbReference>
<dbReference type="GO" id="GO:0003677">
    <property type="term" value="F:DNA binding"/>
    <property type="evidence" value="ECO:0007669"/>
    <property type="project" value="UniProtKB-KW"/>
</dbReference>
<dbReference type="GO" id="GO:0003712">
    <property type="term" value="F:transcription coregulator activity"/>
    <property type="evidence" value="ECO:0000314"/>
    <property type="project" value="MGI"/>
</dbReference>
<dbReference type="GO" id="GO:0008270">
    <property type="term" value="F:zinc ion binding"/>
    <property type="evidence" value="ECO:0007669"/>
    <property type="project" value="UniProtKB-KW"/>
</dbReference>
<dbReference type="GO" id="GO:0006325">
    <property type="term" value="P:chromatin organization"/>
    <property type="evidence" value="ECO:0007669"/>
    <property type="project" value="UniProtKB-KW"/>
</dbReference>
<dbReference type="GO" id="GO:0000122">
    <property type="term" value="P:negative regulation of transcription by RNA polymerase II"/>
    <property type="evidence" value="ECO:0000315"/>
    <property type="project" value="NTNU_SB"/>
</dbReference>
<dbReference type="GO" id="GO:0006355">
    <property type="term" value="P:regulation of DNA-templated transcription"/>
    <property type="evidence" value="ECO:0000314"/>
    <property type="project" value="MGI"/>
</dbReference>
<dbReference type="FunFam" id="3.30.160.60:FF:000471">
    <property type="entry name" value="Zinc finger protein AEBP2"/>
    <property type="match status" value="1"/>
</dbReference>
<dbReference type="FunFam" id="3.30.160.60:FF:000323">
    <property type="entry name" value="zinc finger protein AEBP2"/>
    <property type="match status" value="1"/>
</dbReference>
<dbReference type="Gene3D" id="3.30.160.60">
    <property type="entry name" value="Classic Zinc Finger"/>
    <property type="match status" value="2"/>
</dbReference>
<dbReference type="InterPro" id="IPR052130">
    <property type="entry name" value="AEBP2/jing_C2H2-ZnF"/>
</dbReference>
<dbReference type="InterPro" id="IPR036236">
    <property type="entry name" value="Znf_C2H2_sf"/>
</dbReference>
<dbReference type="InterPro" id="IPR013087">
    <property type="entry name" value="Znf_C2H2_type"/>
</dbReference>
<dbReference type="PANTHER" id="PTHR46541">
    <property type="entry name" value="ZINC FINGER PROTEIN AEBP2"/>
    <property type="match status" value="1"/>
</dbReference>
<dbReference type="PANTHER" id="PTHR46541:SF1">
    <property type="entry name" value="ZINC FINGER PROTEIN AEBP2"/>
    <property type="match status" value="1"/>
</dbReference>
<dbReference type="SMART" id="SM00355">
    <property type="entry name" value="ZnF_C2H2"/>
    <property type="match status" value="3"/>
</dbReference>
<dbReference type="SUPFAM" id="SSF57667">
    <property type="entry name" value="beta-beta-alpha zinc fingers"/>
    <property type="match status" value="2"/>
</dbReference>
<dbReference type="PROSITE" id="PS00028">
    <property type="entry name" value="ZINC_FINGER_C2H2_1"/>
    <property type="match status" value="2"/>
</dbReference>
<dbReference type="PROSITE" id="PS50157">
    <property type="entry name" value="ZINC_FINGER_C2H2_2"/>
    <property type="match status" value="2"/>
</dbReference>
<gene>
    <name type="primary">Aebp2</name>
</gene>
<reference key="1">
    <citation type="journal article" date="2005" name="Science">
        <title>The transcriptional landscape of the mammalian genome.</title>
        <authorList>
            <person name="Carninci P."/>
            <person name="Kasukawa T."/>
            <person name="Katayama S."/>
            <person name="Gough J."/>
            <person name="Frith M.C."/>
            <person name="Maeda N."/>
            <person name="Oyama R."/>
            <person name="Ravasi T."/>
            <person name="Lenhard B."/>
            <person name="Wells C."/>
            <person name="Kodzius R."/>
            <person name="Shimokawa K."/>
            <person name="Bajic V.B."/>
            <person name="Brenner S.E."/>
            <person name="Batalov S."/>
            <person name="Forrest A.R."/>
            <person name="Zavolan M."/>
            <person name="Davis M.J."/>
            <person name="Wilming L.G."/>
            <person name="Aidinis V."/>
            <person name="Allen J.E."/>
            <person name="Ambesi-Impiombato A."/>
            <person name="Apweiler R."/>
            <person name="Aturaliya R.N."/>
            <person name="Bailey T.L."/>
            <person name="Bansal M."/>
            <person name="Baxter L."/>
            <person name="Beisel K.W."/>
            <person name="Bersano T."/>
            <person name="Bono H."/>
            <person name="Chalk A.M."/>
            <person name="Chiu K.P."/>
            <person name="Choudhary V."/>
            <person name="Christoffels A."/>
            <person name="Clutterbuck D.R."/>
            <person name="Crowe M.L."/>
            <person name="Dalla E."/>
            <person name="Dalrymple B.P."/>
            <person name="de Bono B."/>
            <person name="Della Gatta G."/>
            <person name="di Bernardo D."/>
            <person name="Down T."/>
            <person name="Engstrom P."/>
            <person name="Fagiolini M."/>
            <person name="Faulkner G."/>
            <person name="Fletcher C.F."/>
            <person name="Fukushima T."/>
            <person name="Furuno M."/>
            <person name="Futaki S."/>
            <person name="Gariboldi M."/>
            <person name="Georgii-Hemming P."/>
            <person name="Gingeras T.R."/>
            <person name="Gojobori T."/>
            <person name="Green R.E."/>
            <person name="Gustincich S."/>
            <person name="Harbers M."/>
            <person name="Hayashi Y."/>
            <person name="Hensch T.K."/>
            <person name="Hirokawa N."/>
            <person name="Hill D."/>
            <person name="Huminiecki L."/>
            <person name="Iacono M."/>
            <person name="Ikeo K."/>
            <person name="Iwama A."/>
            <person name="Ishikawa T."/>
            <person name="Jakt M."/>
            <person name="Kanapin A."/>
            <person name="Katoh M."/>
            <person name="Kawasawa Y."/>
            <person name="Kelso J."/>
            <person name="Kitamura H."/>
            <person name="Kitano H."/>
            <person name="Kollias G."/>
            <person name="Krishnan S.P."/>
            <person name="Kruger A."/>
            <person name="Kummerfeld S.K."/>
            <person name="Kurochkin I.V."/>
            <person name="Lareau L.F."/>
            <person name="Lazarevic D."/>
            <person name="Lipovich L."/>
            <person name="Liu J."/>
            <person name="Liuni S."/>
            <person name="McWilliam S."/>
            <person name="Madan Babu M."/>
            <person name="Madera M."/>
            <person name="Marchionni L."/>
            <person name="Matsuda H."/>
            <person name="Matsuzawa S."/>
            <person name="Miki H."/>
            <person name="Mignone F."/>
            <person name="Miyake S."/>
            <person name="Morris K."/>
            <person name="Mottagui-Tabar S."/>
            <person name="Mulder N."/>
            <person name="Nakano N."/>
            <person name="Nakauchi H."/>
            <person name="Ng P."/>
            <person name="Nilsson R."/>
            <person name="Nishiguchi S."/>
            <person name="Nishikawa S."/>
            <person name="Nori F."/>
            <person name="Ohara O."/>
            <person name="Okazaki Y."/>
            <person name="Orlando V."/>
            <person name="Pang K.C."/>
            <person name="Pavan W.J."/>
            <person name="Pavesi G."/>
            <person name="Pesole G."/>
            <person name="Petrovsky N."/>
            <person name="Piazza S."/>
            <person name="Reed J."/>
            <person name="Reid J.F."/>
            <person name="Ring B.Z."/>
            <person name="Ringwald M."/>
            <person name="Rost B."/>
            <person name="Ruan Y."/>
            <person name="Salzberg S.L."/>
            <person name="Sandelin A."/>
            <person name="Schneider C."/>
            <person name="Schoenbach C."/>
            <person name="Sekiguchi K."/>
            <person name="Semple C.A."/>
            <person name="Seno S."/>
            <person name="Sessa L."/>
            <person name="Sheng Y."/>
            <person name="Shibata Y."/>
            <person name="Shimada H."/>
            <person name="Shimada K."/>
            <person name="Silva D."/>
            <person name="Sinclair B."/>
            <person name="Sperling S."/>
            <person name="Stupka E."/>
            <person name="Sugiura K."/>
            <person name="Sultana R."/>
            <person name="Takenaka Y."/>
            <person name="Taki K."/>
            <person name="Tammoja K."/>
            <person name="Tan S.L."/>
            <person name="Tang S."/>
            <person name="Taylor M.S."/>
            <person name="Tegner J."/>
            <person name="Teichmann S.A."/>
            <person name="Ueda H.R."/>
            <person name="van Nimwegen E."/>
            <person name="Verardo R."/>
            <person name="Wei C.L."/>
            <person name="Yagi K."/>
            <person name="Yamanishi H."/>
            <person name="Zabarovsky E."/>
            <person name="Zhu S."/>
            <person name="Zimmer A."/>
            <person name="Hide W."/>
            <person name="Bult C."/>
            <person name="Grimmond S.M."/>
            <person name="Teasdale R.D."/>
            <person name="Liu E.T."/>
            <person name="Brusic V."/>
            <person name="Quackenbush J."/>
            <person name="Wahlestedt C."/>
            <person name="Mattick J.S."/>
            <person name="Hume D.A."/>
            <person name="Kai C."/>
            <person name="Sasaki D."/>
            <person name="Tomaru Y."/>
            <person name="Fukuda S."/>
            <person name="Kanamori-Katayama M."/>
            <person name="Suzuki M."/>
            <person name="Aoki J."/>
            <person name="Arakawa T."/>
            <person name="Iida J."/>
            <person name="Imamura K."/>
            <person name="Itoh M."/>
            <person name="Kato T."/>
            <person name="Kawaji H."/>
            <person name="Kawagashira N."/>
            <person name="Kawashima T."/>
            <person name="Kojima M."/>
            <person name="Kondo S."/>
            <person name="Konno H."/>
            <person name="Nakano K."/>
            <person name="Ninomiya N."/>
            <person name="Nishio T."/>
            <person name="Okada M."/>
            <person name="Plessy C."/>
            <person name="Shibata K."/>
            <person name="Shiraki T."/>
            <person name="Suzuki S."/>
            <person name="Tagami M."/>
            <person name="Waki K."/>
            <person name="Watahiki A."/>
            <person name="Okamura-Oho Y."/>
            <person name="Suzuki H."/>
            <person name="Kawai J."/>
            <person name="Hayashizaki Y."/>
        </authorList>
    </citation>
    <scope>NUCLEOTIDE SEQUENCE [LARGE SCALE MRNA] (ISOFORMS 3 AND 4)</scope>
    <scope>NUCLEOTIDE SEQUENCE [LARGE SCALE MRNA] OF 164-503 (ISOFORM 2)</scope>
    <source>
        <strain>C57BL/6J</strain>
        <strain>NOD</strain>
        <tissue>Corpora quadrigemina</tissue>
        <tissue>Dendritic cell</tissue>
        <tissue>Skin</tissue>
    </source>
</reference>
<reference key="2">
    <citation type="journal article" date="2004" name="Genome Res.">
        <title>The status, quality, and expansion of the NIH full-length cDNA project: the Mammalian Gene Collection (MGC).</title>
        <authorList>
            <consortium name="The MGC Project Team"/>
        </authorList>
    </citation>
    <scope>NUCLEOTIDE SEQUENCE [LARGE SCALE MRNA] (ISOFORM 3)</scope>
    <scope>NUCLEOTIDE SEQUENCE [LARGE SCALE MRNA] OF 50-504 (ISOFORM 5)</scope>
    <source>
        <strain>FVB/N</strain>
        <tissue>Mammary tumor</tissue>
    </source>
</reference>
<reference key="3">
    <citation type="journal article" date="1999" name="J. Biol. Chem.">
        <title>Cloning and characterization of a novel zinc finger transcriptional repressor. A direct role of the zinc finger motif in repression.</title>
        <authorList>
            <person name="He G.-P."/>
            <person name="Kim S."/>
            <person name="Ro H.-S."/>
        </authorList>
    </citation>
    <scope>NUCLEOTIDE SEQUENCE [MRNA] OF 178-504 (ISOFORM 1)</scope>
    <scope>FUNCTION</scope>
    <scope>DNA-BINDING</scope>
    <scope>TISSUE SPECIFICITY</scope>
    <scope>MUTAGENESIS OF 315-HIS-SER-316</scope>
    <source>
        <strain>Swiss albino</strain>
    </source>
</reference>
<reference key="4">
    <citation type="journal article" date="2007" name="Proc. Natl. Acad. Sci. U.S.A.">
        <title>Large-scale phosphorylation analysis of mouse liver.</title>
        <authorList>
            <person name="Villen J."/>
            <person name="Beausoleil S.A."/>
            <person name="Gerber S.A."/>
            <person name="Gygi S.P."/>
        </authorList>
    </citation>
    <scope>PHOSPHORYLATION [LARGE SCALE ANALYSIS] AT SER-199</scope>
    <scope>IDENTIFICATION BY MASS SPECTROMETRY [LARGE SCALE ANALYSIS]</scope>
    <source>
        <tissue>Liver</tissue>
    </source>
</reference>
<reference key="5">
    <citation type="journal article" date="2008" name="Mol. Cell">
        <title>EZH1 mediates methylation on histone H3 lysine 27 and complements EZH2 in maintaining stem cell identity and executing pluripotency.</title>
        <authorList>
            <person name="Shen X."/>
            <person name="Liu Y."/>
            <person name="Hsu Y.-J."/>
            <person name="Fujiwara Y."/>
            <person name="Kim J."/>
            <person name="Mao X."/>
            <person name="Yuan G.-C."/>
            <person name="Orkin S.H."/>
        </authorList>
    </citation>
    <scope>IDENTIFICATION IN THE PRC2/EZH1 COMPLEX</scope>
</reference>
<reference key="6">
    <citation type="journal article" date="2010" name="Cell">
        <title>A tissue-specific atlas of mouse protein phosphorylation and expression.</title>
        <authorList>
            <person name="Huttlin E.L."/>
            <person name="Jedrychowski M.P."/>
            <person name="Elias J.E."/>
            <person name="Goswami T."/>
            <person name="Rad R."/>
            <person name="Beausoleil S.A."/>
            <person name="Villen J."/>
            <person name="Haas W."/>
            <person name="Sowa M.E."/>
            <person name="Gygi S.P."/>
        </authorList>
    </citation>
    <scope>PHOSPHORYLATION [LARGE SCALE ANALYSIS] AT SER-21; SER-24; SER-199 AND SER-383</scope>
    <scope>IDENTIFICATION BY MASS SPECTROMETRY [LARGE SCALE ANALYSIS]</scope>
    <source>
        <tissue>Brain</tissue>
        <tissue>Brown adipose tissue</tissue>
        <tissue>Kidney</tissue>
        <tissue>Lung</tissue>
        <tissue>Spleen</tissue>
        <tissue>Testis</tissue>
    </source>
</reference>
<reference key="7">
    <citation type="journal article" date="2010" name="Cell Stem Cell">
        <title>Polycomb-like 2 associates with PRC2 and regulates transcriptional networks during mouse embryonic stem cell self-renewal and differentiation.</title>
        <authorList>
            <person name="Walker E."/>
            <person name="Chang W.Y."/>
            <person name="Hunkapiller J."/>
            <person name="Cagney G."/>
            <person name="Garcha K."/>
            <person name="Torchia J."/>
            <person name="Krogan N.J."/>
            <person name="Reiter J.F."/>
            <person name="Stanford W.L."/>
        </authorList>
    </citation>
    <scope>FUNCTION</scope>
    <scope>IDENTIFICATION IN THE PRC2 COMPLEX</scope>
</reference>
<organism>
    <name type="scientific">Mus musculus</name>
    <name type="common">Mouse</name>
    <dbReference type="NCBI Taxonomy" id="10090"/>
    <lineage>
        <taxon>Eukaryota</taxon>
        <taxon>Metazoa</taxon>
        <taxon>Chordata</taxon>
        <taxon>Craniata</taxon>
        <taxon>Vertebrata</taxon>
        <taxon>Euteleostomi</taxon>
        <taxon>Mammalia</taxon>
        <taxon>Eutheria</taxon>
        <taxon>Euarchontoglires</taxon>
        <taxon>Glires</taxon>
        <taxon>Rodentia</taxon>
        <taxon>Myomorpha</taxon>
        <taxon>Muroidea</taxon>
        <taxon>Muridae</taxon>
        <taxon>Murinae</taxon>
        <taxon>Mus</taxon>
        <taxon>Mus</taxon>
    </lineage>
</organism>
<accession>Q9Z248</accession>
<accession>Q6PF91</accession>
<accession>Q78HB0</accession>
<accession>Q8BGV1</accession>
<accession>Q8CE51</accession>
<name>AEBP2_MOUSE</name>
<keyword id="KW-0007">Acetylation</keyword>
<keyword id="KW-0025">Alternative splicing</keyword>
<keyword id="KW-0156">Chromatin regulator</keyword>
<keyword id="KW-0238">DNA-binding</keyword>
<keyword id="KW-0479">Metal-binding</keyword>
<keyword id="KW-0539">Nucleus</keyword>
<keyword id="KW-0597">Phosphoprotein</keyword>
<keyword id="KW-1185">Reference proteome</keyword>
<keyword id="KW-0677">Repeat</keyword>
<keyword id="KW-0678">Repressor</keyword>
<keyword id="KW-0804">Transcription</keyword>
<keyword id="KW-0805">Transcription regulation</keyword>
<keyword id="KW-0862">Zinc</keyword>
<keyword id="KW-0863">Zinc-finger</keyword>
<protein>
    <recommendedName>
        <fullName>Zinc finger protein AEBP2</fullName>
    </recommendedName>
    <alternativeName>
        <fullName>Adipocyte enhancer-binding protein 2</fullName>
        <shortName>AE-binding protein 2</shortName>
    </alternativeName>
</protein>
<feature type="initiator methionine" description="Removed" evidence="2">
    <location>
        <position position="1"/>
    </location>
</feature>
<feature type="chain" id="PRO_0000341591" description="Zinc finger protein AEBP2">
    <location>
        <begin position="2"/>
        <end position="504"/>
    </location>
</feature>
<feature type="zinc finger region" description="C2H2-type 1" evidence="3">
    <location>
        <begin position="254"/>
        <end position="279"/>
    </location>
</feature>
<feature type="zinc finger region" description="C2H2-type 2; degenerate" evidence="3">
    <location>
        <begin position="293"/>
        <end position="315"/>
    </location>
</feature>
<feature type="zinc finger region" description="C2H2-type 3" evidence="3">
    <location>
        <begin position="321"/>
        <end position="345"/>
    </location>
</feature>
<feature type="region of interest" description="Disordered" evidence="4">
    <location>
        <begin position="1"/>
        <end position="219"/>
    </location>
</feature>
<feature type="region of interest" description="Interaction with RBBP4" evidence="1">
    <location>
        <begin position="202"/>
        <end position="287"/>
    </location>
</feature>
<feature type="region of interest" description="Disordered" evidence="4">
    <location>
        <begin position="345"/>
        <end position="387"/>
    </location>
</feature>
<feature type="region of interest" description="Interaction with SUZ12" evidence="2">
    <location>
        <begin position="400"/>
        <end position="471"/>
    </location>
</feature>
<feature type="region of interest" description="Important for nucleosome binding activity of the PRC2 complex" evidence="2">
    <location>
        <begin position="488"/>
        <end position="504"/>
    </location>
</feature>
<feature type="compositionally biased region" description="Low complexity" evidence="4">
    <location>
        <begin position="16"/>
        <end position="30"/>
    </location>
</feature>
<feature type="compositionally biased region" description="Acidic residues" evidence="4">
    <location>
        <begin position="36"/>
        <end position="49"/>
    </location>
</feature>
<feature type="compositionally biased region" description="Gly residues" evidence="4">
    <location>
        <begin position="59"/>
        <end position="69"/>
    </location>
</feature>
<feature type="compositionally biased region" description="Acidic residues" evidence="4">
    <location>
        <begin position="86"/>
        <end position="110"/>
    </location>
</feature>
<feature type="compositionally biased region" description="Low complexity" evidence="4">
    <location>
        <begin position="129"/>
        <end position="140"/>
    </location>
</feature>
<feature type="compositionally biased region" description="Basic and acidic residues" evidence="4">
    <location>
        <begin position="142"/>
        <end position="153"/>
    </location>
</feature>
<feature type="compositionally biased region" description="Gly residues" evidence="4">
    <location>
        <begin position="154"/>
        <end position="168"/>
    </location>
</feature>
<feature type="compositionally biased region" description="Gly residues" evidence="4">
    <location>
        <begin position="178"/>
        <end position="189"/>
    </location>
</feature>
<feature type="compositionally biased region" description="Polar residues" evidence="4">
    <location>
        <begin position="345"/>
        <end position="358"/>
    </location>
</feature>
<feature type="compositionally biased region" description="Basic residues" evidence="4">
    <location>
        <begin position="370"/>
        <end position="385"/>
    </location>
</feature>
<feature type="modified residue" description="N-acetylalanine" evidence="2">
    <location>
        <position position="2"/>
    </location>
</feature>
<feature type="modified residue" description="Phosphoserine" evidence="2">
    <location>
        <position position="18"/>
    </location>
</feature>
<feature type="modified residue" description="Phosphoserine" evidence="13">
    <location>
        <position position="21"/>
    </location>
</feature>
<feature type="modified residue" description="Phosphoserine" evidence="13">
    <location>
        <position position="24"/>
    </location>
</feature>
<feature type="modified residue" description="Phosphoserine" evidence="2">
    <location>
        <position position="131"/>
    </location>
</feature>
<feature type="modified residue" description="Phosphoserine" evidence="12 13">
    <location>
        <position position="199"/>
    </location>
</feature>
<feature type="modified residue" description="Phosphoserine" evidence="2">
    <location>
        <position position="203"/>
    </location>
</feature>
<feature type="modified residue" description="Phosphoserine" evidence="2">
    <location>
        <position position="204"/>
    </location>
</feature>
<feature type="modified residue" description="Phosphoserine" evidence="13">
    <location>
        <position position="383"/>
    </location>
</feature>
<feature type="splice variant" id="VSP_034360" description="In isoform 3 and isoform 4." evidence="8 9">
    <location>
        <begin position="1"/>
        <end position="222"/>
    </location>
</feature>
<feature type="splice variant" id="VSP_034361" description="In isoform 5." evidence="8">
    <location>
        <begin position="116"/>
        <end position="197"/>
    </location>
</feature>
<feature type="splice variant" id="VSP_034362" description="In isoform 2, isoform 4 and isoform 5." evidence="8 9">
    <location>
        <begin position="497"/>
        <end position="504"/>
    </location>
</feature>
<feature type="splice variant" id="VSP_034363" description="In isoform 3." evidence="8 9">
    <original>FDILNFPR</original>
    <variation>TLIRKMFNLYLSKQ</variation>
    <location>
        <begin position="497"/>
        <end position="504"/>
    </location>
</feature>
<feature type="mutagenesis site" description="Abrogates transcriptional repression but does not affect DNA-binding." evidence="5">
    <original>HS</original>
    <variation>R</variation>
    <location>
        <begin position="315"/>
        <end position="316"/>
    </location>
</feature>
<feature type="sequence conflict" description="In Ref. 2; AAH31376." evidence="10" ref="2">
    <original>D</original>
    <variation>E</variation>
    <location>
        <position position="95"/>
    </location>
</feature>
<feature type="sequence conflict" description="In Ref. 3; AAD02854." evidence="10" ref="3">
    <original>S</original>
    <variation>T</variation>
    <location>
        <position position="189"/>
    </location>
</feature>
<feature type="sequence conflict" description="In Ref. 1; BAC26241." evidence="10" ref="1">
    <original>D</original>
    <variation>Y</variation>
    <location>
        <position position="273"/>
    </location>
</feature>
<feature type="sequence conflict" description="In Ref. 1; BAC26241." evidence="10" ref="1">
    <original>S</original>
    <variation>F</variation>
    <location>
        <position position="355"/>
    </location>
</feature>
<proteinExistence type="evidence at protein level"/>
<evidence type="ECO:0000250" key="1"/>
<evidence type="ECO:0000250" key="2">
    <source>
        <dbReference type="UniProtKB" id="Q6ZN18"/>
    </source>
</evidence>
<evidence type="ECO:0000255" key="3">
    <source>
        <dbReference type="PROSITE-ProRule" id="PRU00042"/>
    </source>
</evidence>
<evidence type="ECO:0000256" key="4">
    <source>
        <dbReference type="SAM" id="MobiDB-lite"/>
    </source>
</evidence>
<evidence type="ECO:0000269" key="5">
    <source>
    </source>
</evidence>
<evidence type="ECO:0000269" key="6">
    <source>
    </source>
</evidence>
<evidence type="ECO:0000269" key="7">
    <source>
    </source>
</evidence>
<evidence type="ECO:0000303" key="8">
    <source>
    </source>
</evidence>
<evidence type="ECO:0000303" key="9">
    <source>
    </source>
</evidence>
<evidence type="ECO:0000305" key="10"/>
<evidence type="ECO:0000305" key="11">
    <source>
    </source>
</evidence>
<evidence type="ECO:0007744" key="12">
    <source>
    </source>
</evidence>
<evidence type="ECO:0007744" key="13">
    <source>
    </source>
</evidence>
<sequence>MAAALADMADLEELSRLSPLSPGSPGPAARGRAEPPEEEEEEDDEEAEAEAVAALLLNGGAGGGAGGGEAETMSEPSPESASQAGGDEDEDEEDDEDEGSSSGGAEEESSAESLVGSSSGGCSGDETRSLSPGAASSSSGDGDGKEGLEEPKGPRGGPGGPGSSGGGSSSSSVVSSGGDEGYGTGGGGSSATSGGRRGSLEMSSDGEPLSRMDSEDSISSTLMDIDSTISSGRSTPAMMNGQGSTTASSKHIAYNCCWDQCQACFNSSPDLADHIRSIHVDGQRGGVFVCLWKGCKVYNTPSTSQSWLQRHMLTHSGDKPFKCVVGGCNASFASQGGLARHVPTHFSQQNSSKVSSQPKAKEESPSKAGMNKRRKLKNKRRRSLPRPHDFFDAQTLDAIRHRAICFNLSAHIESLGKGHSVVFHSTVIAKRKEESGKIKLLLHWMPEDILPDVWVNESERHQLKTKVVHLSKLPKDTALLLDPNIYRTMPQKRLKRFDILNFPR</sequence>
<comment type="function">
    <text evidence="7 11">Acts as an accessory subunit for the core Polycomb repressive complex 2 (PRC2), which mediates histone H3K27 (H3K27me3) trimethylation on chromatin leading to transcriptional repression of the affected target gene. Plays a role in nucleosome localization of the PRC2 complex.</text>
</comment>
<comment type="subunit">
    <text evidence="2 6 7">Self-associates (By similarity). Associates with the PRC2 complex, which consists of the core components EED, EZH1 or EZH2, SUZ12, and RBBP4, and various combinations of accessory subunits including AEBP2, JARID2, PHF19, MTF2 and EPOP (PubMed:19026780, PubMed:20144788). Found in a monomeric PRC2.2 (class 2) complex consisting of at least SUZ12, RBBP4, AEBP2 and JARID2 (By similarity). Within the PRC2 complex, interacts directly with SUZ12; competes with PHF19 for SUZ12 binding (By similarity). Interacts with EED, EZH2, and RBBP4 (By similarity). May also interact with RBBP7 (By similarity).</text>
</comment>
<comment type="subcellular location">
    <subcellularLocation>
        <location evidence="2">Nucleus</location>
    </subcellularLocation>
    <text evidence="2">Localizes to chromatin as part of the PRC2 complex.</text>
</comment>
<comment type="alternative products">
    <event type="alternative splicing"/>
    <isoform>
        <id>Q9Z248-1</id>
        <name>1</name>
        <sequence type="displayed"/>
    </isoform>
    <isoform>
        <id>Q9Z248-2</id>
        <name>2</name>
        <sequence type="described" ref="VSP_034362"/>
    </isoform>
    <isoform>
        <id>Q9Z248-3</id>
        <name>3</name>
        <sequence type="described" ref="VSP_034360 VSP_034363"/>
    </isoform>
    <isoform>
        <id>Q9Z248-4</id>
        <name>4</name>
        <sequence type="described" ref="VSP_034360 VSP_034362"/>
    </isoform>
    <isoform>
        <id>Q9Z248-5</id>
        <name>5</name>
        <sequence type="described" ref="VSP_034361 VSP_034362"/>
    </isoform>
</comment>
<comment type="tissue specificity">
    <text evidence="5">Expressed in brain, brown adipose tissue, white adipose tissue, heart, kidney, lung, skeletal muscle, small intestine and spleen. Expressed at low levels in liver.</text>
</comment>
<comment type="similarity">
    <text evidence="10">Belongs to the AEBP2/jing C2H2-type zinc-finger family.</text>
</comment>
<comment type="sequence caution" evidence="10">
    <conflict type="frameshift">
        <sequence resource="EMBL-CDS" id="AAD02854"/>
    </conflict>
</comment>
<comment type="sequence caution" evidence="10">
    <conflict type="frameshift">
        <sequence resource="EMBL-CDS" id="BAC32508"/>
    </conflict>
</comment>
<comment type="sequence caution" evidence="10">
    <conflict type="frameshift">
        <sequence resource="EMBL-CDS" id="BAC32562"/>
    </conflict>
</comment>